<sequence>MDQGSQTIKGKDRYKSGVMEYRKMGYWEPDYEPKETDVIACFRITPQDGVDPIEAAAAVAGESSTATWTVVWTDRLTAAEKYRAKAYRVDQVPNTDDQYFAYIAYDLDLFENGSIANLTASIIGNVFGFKPLKGLRLEDMRLPTAYVKTFQGPATGIVVERERLDKFGRPLLGATVKPKLGLSGRNYGRVVYEALKGGLDFTKDDENINSQPFMDWRERFLYCMEAVNKAQAATGEIKGTYLNVTAATMEDMYERAEFARDLGSNIIMIDLVIGWTAMQSMAKWARRNNMILHLHRAGHSTYTRQKTHGVSFRVIAKWARLAGVDHIHAGTVVGKLEGDPATTKGYYDICRDEFTHRKLENGIFFDQPWASLNKMMPVASGGIHAGQMHQLLDLLGDDTVLQFGGGTIGHPMGIAAGATANRVALECMVLARNEGRDIVNEGPEILQEAARSCTPLQQALETWKDVTFNYTSTDSPDYAVTATASV</sequence>
<proteinExistence type="inferred from homology"/>
<name>RBL_AURMS</name>
<gene>
    <name evidence="1" type="primary">cbbL</name>
    <name evidence="1" type="synonym">rbcL</name>
</gene>
<reference key="1">
    <citation type="journal article" date="1996" name="Microbiology">
        <title>Unusual ribulose-1,5-bisphosphate carboxylase/oxygenase genes from a marine Manganese-oxidizing bacterium.</title>
        <authorList>
            <person name="Caspi R."/>
            <person name="Haygood M.G."/>
            <person name="Tebo B.M."/>
        </authorList>
    </citation>
    <scope>NUCLEOTIDE SEQUENCE [GENOMIC DNA]</scope>
</reference>
<evidence type="ECO:0000255" key="1">
    <source>
        <dbReference type="HAMAP-Rule" id="MF_01338"/>
    </source>
</evidence>
<dbReference type="EC" id="4.1.1.39" evidence="1"/>
<dbReference type="EMBL" id="L32182">
    <property type="protein sequence ID" value="AAB41464.1"/>
    <property type="molecule type" value="Genomic_DNA"/>
</dbReference>
<dbReference type="SMR" id="Q48952"/>
<dbReference type="BioCyc" id="AURANTIMONAS:SI859A1_00470-MONOMER"/>
<dbReference type="GO" id="GO:0000287">
    <property type="term" value="F:magnesium ion binding"/>
    <property type="evidence" value="ECO:0007669"/>
    <property type="project" value="UniProtKB-UniRule"/>
</dbReference>
<dbReference type="GO" id="GO:0004497">
    <property type="term" value="F:monooxygenase activity"/>
    <property type="evidence" value="ECO:0007669"/>
    <property type="project" value="UniProtKB-KW"/>
</dbReference>
<dbReference type="GO" id="GO:0016984">
    <property type="term" value="F:ribulose-bisphosphate carboxylase activity"/>
    <property type="evidence" value="ECO:0007669"/>
    <property type="project" value="UniProtKB-UniRule"/>
</dbReference>
<dbReference type="GO" id="GO:0019253">
    <property type="term" value="P:reductive pentose-phosphate cycle"/>
    <property type="evidence" value="ECO:0007669"/>
    <property type="project" value="UniProtKB-UniRule"/>
</dbReference>
<dbReference type="CDD" id="cd08212">
    <property type="entry name" value="RuBisCO_large_I"/>
    <property type="match status" value="1"/>
</dbReference>
<dbReference type="Gene3D" id="3.20.20.110">
    <property type="entry name" value="Ribulose bisphosphate carboxylase, large subunit, C-terminal domain"/>
    <property type="match status" value="1"/>
</dbReference>
<dbReference type="Gene3D" id="3.30.70.150">
    <property type="entry name" value="RuBisCO large subunit, N-terminal domain"/>
    <property type="match status" value="1"/>
</dbReference>
<dbReference type="HAMAP" id="MF_01338">
    <property type="entry name" value="RuBisCO_L_type1"/>
    <property type="match status" value="1"/>
</dbReference>
<dbReference type="InterPro" id="IPR033966">
    <property type="entry name" value="RuBisCO"/>
</dbReference>
<dbReference type="InterPro" id="IPR020878">
    <property type="entry name" value="RuBisCo_large_chain_AS"/>
</dbReference>
<dbReference type="InterPro" id="IPR000685">
    <property type="entry name" value="RuBisCO_lsu_C"/>
</dbReference>
<dbReference type="InterPro" id="IPR036376">
    <property type="entry name" value="RuBisCO_lsu_C_sf"/>
</dbReference>
<dbReference type="InterPro" id="IPR017443">
    <property type="entry name" value="RuBisCO_lsu_fd_N"/>
</dbReference>
<dbReference type="InterPro" id="IPR036422">
    <property type="entry name" value="RuBisCO_lsu_N_sf"/>
</dbReference>
<dbReference type="InterPro" id="IPR020888">
    <property type="entry name" value="RuBisCO_lsuI"/>
</dbReference>
<dbReference type="NCBIfam" id="NF003252">
    <property type="entry name" value="PRK04208.1"/>
    <property type="match status" value="1"/>
</dbReference>
<dbReference type="PANTHER" id="PTHR42704">
    <property type="entry name" value="RIBULOSE BISPHOSPHATE CARBOXYLASE"/>
    <property type="match status" value="1"/>
</dbReference>
<dbReference type="PANTHER" id="PTHR42704:SF17">
    <property type="entry name" value="RIBULOSE BISPHOSPHATE CARBOXYLASE LARGE CHAIN"/>
    <property type="match status" value="1"/>
</dbReference>
<dbReference type="Pfam" id="PF00016">
    <property type="entry name" value="RuBisCO_large"/>
    <property type="match status" value="1"/>
</dbReference>
<dbReference type="Pfam" id="PF02788">
    <property type="entry name" value="RuBisCO_large_N"/>
    <property type="match status" value="1"/>
</dbReference>
<dbReference type="SFLD" id="SFLDG01052">
    <property type="entry name" value="RuBisCO"/>
    <property type="match status" value="1"/>
</dbReference>
<dbReference type="SFLD" id="SFLDS00014">
    <property type="entry name" value="RuBisCO"/>
    <property type="match status" value="1"/>
</dbReference>
<dbReference type="SFLD" id="SFLDG00301">
    <property type="entry name" value="RuBisCO-like_proteins"/>
    <property type="match status" value="1"/>
</dbReference>
<dbReference type="SUPFAM" id="SSF51649">
    <property type="entry name" value="RuBisCo, C-terminal domain"/>
    <property type="match status" value="1"/>
</dbReference>
<dbReference type="SUPFAM" id="SSF54966">
    <property type="entry name" value="RuBisCO, large subunit, small (N-terminal) domain"/>
    <property type="match status" value="1"/>
</dbReference>
<dbReference type="PROSITE" id="PS00157">
    <property type="entry name" value="RUBISCO_LARGE"/>
    <property type="match status" value="1"/>
</dbReference>
<feature type="chain" id="PRO_0000062627" description="Ribulose bisphosphate carboxylase large chain">
    <location>
        <begin position="1"/>
        <end position="486"/>
    </location>
</feature>
<feature type="active site" description="Proton acceptor" evidence="1">
    <location>
        <position position="177"/>
    </location>
</feature>
<feature type="active site" description="Proton acceptor" evidence="1">
    <location>
        <position position="295"/>
    </location>
</feature>
<feature type="binding site" description="in homodimeric partner" evidence="1">
    <location>
        <position position="125"/>
    </location>
    <ligand>
        <name>substrate</name>
    </ligand>
</feature>
<feature type="binding site" evidence="1">
    <location>
        <position position="175"/>
    </location>
    <ligand>
        <name>substrate</name>
    </ligand>
</feature>
<feature type="binding site" evidence="1">
    <location>
        <position position="179"/>
    </location>
    <ligand>
        <name>substrate</name>
    </ligand>
</feature>
<feature type="binding site" description="via carbamate group" evidence="1">
    <location>
        <position position="203"/>
    </location>
    <ligand>
        <name>Mg(2+)</name>
        <dbReference type="ChEBI" id="CHEBI:18420"/>
    </ligand>
</feature>
<feature type="binding site" evidence="1">
    <location>
        <position position="205"/>
    </location>
    <ligand>
        <name>Mg(2+)</name>
        <dbReference type="ChEBI" id="CHEBI:18420"/>
    </ligand>
</feature>
<feature type="binding site" evidence="1">
    <location>
        <position position="206"/>
    </location>
    <ligand>
        <name>Mg(2+)</name>
        <dbReference type="ChEBI" id="CHEBI:18420"/>
    </ligand>
</feature>
<feature type="binding site" evidence="1">
    <location>
        <position position="296"/>
    </location>
    <ligand>
        <name>substrate</name>
    </ligand>
</feature>
<feature type="binding site" evidence="1">
    <location>
        <position position="328"/>
    </location>
    <ligand>
        <name>substrate</name>
    </ligand>
</feature>
<feature type="binding site" evidence="1">
    <location>
        <position position="380"/>
    </location>
    <ligand>
        <name>substrate</name>
    </ligand>
</feature>
<feature type="site" description="Transition state stabilizer" evidence="1">
    <location>
        <position position="335"/>
    </location>
</feature>
<feature type="modified residue" description="N6-carboxylysine" evidence="1">
    <location>
        <position position="203"/>
    </location>
</feature>
<keyword id="KW-0113">Calvin cycle</keyword>
<keyword id="KW-0120">Carbon dioxide fixation</keyword>
<keyword id="KW-0456">Lyase</keyword>
<keyword id="KW-0460">Magnesium</keyword>
<keyword id="KW-0479">Metal-binding</keyword>
<keyword id="KW-0503">Monooxygenase</keyword>
<keyword id="KW-0560">Oxidoreductase</keyword>
<accession>Q48952</accession>
<organism>
    <name type="scientific">Aurantimonas manganoxydans (strain ATCC BAA-1229 / DSM 21871 / SI85-9A1)</name>
    <dbReference type="NCBI Taxonomy" id="287752"/>
    <lineage>
        <taxon>Bacteria</taxon>
        <taxon>Pseudomonadati</taxon>
        <taxon>Pseudomonadota</taxon>
        <taxon>Alphaproteobacteria</taxon>
        <taxon>Hyphomicrobiales</taxon>
        <taxon>Aurantimonadaceae</taxon>
        <taxon>Aurantimonas</taxon>
    </lineage>
</organism>
<comment type="function">
    <text evidence="1">RuBisCO catalyzes two reactions: the carboxylation of D-ribulose 1,5-bisphosphate, the primary event in carbon dioxide fixation, as well as the oxidative fragmentation of the pentose substrate. Both reactions occur simultaneously and in competition at the same active site.</text>
</comment>
<comment type="catalytic activity">
    <reaction evidence="1">
        <text>2 (2R)-3-phosphoglycerate + 2 H(+) = D-ribulose 1,5-bisphosphate + CO2 + H2O</text>
        <dbReference type="Rhea" id="RHEA:23124"/>
        <dbReference type="ChEBI" id="CHEBI:15377"/>
        <dbReference type="ChEBI" id="CHEBI:15378"/>
        <dbReference type="ChEBI" id="CHEBI:16526"/>
        <dbReference type="ChEBI" id="CHEBI:57870"/>
        <dbReference type="ChEBI" id="CHEBI:58272"/>
        <dbReference type="EC" id="4.1.1.39"/>
    </reaction>
</comment>
<comment type="catalytic activity">
    <reaction evidence="1">
        <text>D-ribulose 1,5-bisphosphate + O2 = 2-phosphoglycolate + (2R)-3-phosphoglycerate + 2 H(+)</text>
        <dbReference type="Rhea" id="RHEA:36631"/>
        <dbReference type="ChEBI" id="CHEBI:15378"/>
        <dbReference type="ChEBI" id="CHEBI:15379"/>
        <dbReference type="ChEBI" id="CHEBI:57870"/>
        <dbReference type="ChEBI" id="CHEBI:58033"/>
        <dbReference type="ChEBI" id="CHEBI:58272"/>
    </reaction>
</comment>
<comment type="cofactor">
    <cofactor evidence="1">
        <name>Mg(2+)</name>
        <dbReference type="ChEBI" id="CHEBI:18420"/>
    </cofactor>
    <text evidence="1">Binds 1 Mg(2+) ion per subunit.</text>
</comment>
<comment type="subunit">
    <text evidence="1">Heterohexadecamer of 8 large chains and 8 small chains.</text>
</comment>
<comment type="miscellaneous">
    <text evidence="1">The basic functional RuBisCO is composed of a large chain homodimer in a 'head-to-tail' conformation. In form I RuBisCO this homodimer is arranged in a barrel-like tetramer with the small subunits forming a tetrameric 'cap' on each end of the 'barrel'.</text>
</comment>
<comment type="similarity">
    <text evidence="1">Belongs to the RuBisCO large chain family. Type I subfamily.</text>
</comment>
<protein>
    <recommendedName>
        <fullName evidence="1">Ribulose bisphosphate carboxylase large chain</fullName>
        <shortName evidence="1">RuBisCO large subunit</shortName>
        <ecNumber evidence="1">4.1.1.39</ecNumber>
    </recommendedName>
</protein>